<evidence type="ECO:0000250" key="1"/>
<evidence type="ECO:0000269" key="2">
    <source>
    </source>
</evidence>
<evidence type="ECO:0000305" key="3"/>
<sequence>MATFELYRRSTIGMCLTETLDEMVSSGTLSPELAIQVLVQFDKSMTEALENQVKSKVSIKGHLHTYRFCDNVWTFILTEASFKNEETTEQVGKVKIVACDSKLLSQ</sequence>
<keyword id="KW-0396">Initiation factor</keyword>
<keyword id="KW-0539">Nucleus</keyword>
<keyword id="KW-0611">Plant defense</keyword>
<keyword id="KW-0648">Protein biosynthesis</keyword>
<keyword id="KW-1185">Reference proteome</keyword>
<keyword id="KW-0804">Transcription</keyword>
<keyword id="KW-0805">Transcription regulation</keyword>
<dbReference type="EMBL" id="AF532975">
    <property type="protein sequence ID" value="AAO33769.1"/>
    <property type="molecule type" value="Genomic_DNA"/>
</dbReference>
<dbReference type="EMBL" id="AY643716">
    <property type="protein sequence ID" value="AAV53715.1"/>
    <property type="molecule type" value="mRNA"/>
</dbReference>
<dbReference type="EMBL" id="AY643717">
    <property type="protein sequence ID" value="AAV53716.1"/>
    <property type="molecule type" value="mRNA"/>
</dbReference>
<dbReference type="EMBL" id="CM000130">
    <property type="status" value="NOT_ANNOTATED_CDS"/>
    <property type="molecule type" value="Genomic_DNA"/>
</dbReference>
<dbReference type="SMR" id="A2XZI2"/>
<dbReference type="STRING" id="39946.A2XZI2"/>
<dbReference type="EnsemblPlants" id="BGIOSGA019022-TA">
    <property type="protein sequence ID" value="BGIOSGA019022-PA"/>
    <property type="gene ID" value="BGIOSGA019022"/>
</dbReference>
<dbReference type="EnsemblPlants" id="OsGoSa_05g0000560.01">
    <property type="protein sequence ID" value="OsGoSa_05g0000560.01"/>
    <property type="gene ID" value="OsGoSa_05g0000560"/>
</dbReference>
<dbReference type="EnsemblPlants" id="OsGoSa_05g0000560.02">
    <property type="protein sequence ID" value="OsGoSa_05g0000560.02"/>
    <property type="gene ID" value="OsGoSa_05g0000560"/>
</dbReference>
<dbReference type="EnsemblPlants" id="OsGoSa_05g0000560.03">
    <property type="protein sequence ID" value="OsGoSa_05g0000560.03"/>
    <property type="gene ID" value="OsGoSa_05g0000560"/>
</dbReference>
<dbReference type="EnsemblPlants" id="OsIR64_05g0000580.01">
    <property type="protein sequence ID" value="OsIR64_05g0000580.01"/>
    <property type="gene ID" value="OsIR64_05g0000580"/>
</dbReference>
<dbReference type="EnsemblPlants" id="OsIR64_05g0000580.02">
    <property type="protein sequence ID" value="OsIR64_05g0000580.02"/>
    <property type="gene ID" value="OsIR64_05g0000580"/>
</dbReference>
<dbReference type="EnsemblPlants" id="OsKYG_05g0000540.01">
    <property type="protein sequence ID" value="OsKYG_05g0000540.01"/>
    <property type="gene ID" value="OsKYG_05g0000540"/>
</dbReference>
<dbReference type="EnsemblPlants" id="OsKYG_05g0000540.02">
    <property type="protein sequence ID" value="OsKYG_05g0000540.02"/>
    <property type="gene ID" value="OsKYG_05g0000540"/>
</dbReference>
<dbReference type="EnsemblPlants" id="OsKYG_05g0000540.03">
    <property type="protein sequence ID" value="OsKYG_05g0000540.03"/>
    <property type="gene ID" value="OsKYG_05g0000540"/>
</dbReference>
<dbReference type="EnsemblPlants" id="OsLaMu_05g0000590.01">
    <property type="protein sequence ID" value="OsLaMu_05g0000590.01"/>
    <property type="gene ID" value="OsLaMu_05g0000590"/>
</dbReference>
<dbReference type="EnsemblPlants" id="OsLaMu_05g0000590.02">
    <property type="protein sequence ID" value="OsLaMu_05g0000590.02"/>
    <property type="gene ID" value="OsLaMu_05g0000590"/>
</dbReference>
<dbReference type="EnsemblPlants" id="OsLima_05g0000600.01">
    <property type="protein sequence ID" value="OsLima_05g0000600.01"/>
    <property type="gene ID" value="OsLima_05g0000600"/>
</dbReference>
<dbReference type="EnsemblPlants" id="OsLima_05g0000600.02">
    <property type="protein sequence ID" value="OsLima_05g0000600.02"/>
    <property type="gene ID" value="OsLima_05g0000600"/>
</dbReference>
<dbReference type="EnsemblPlants" id="OsLima_05g0000600.03">
    <property type="protein sequence ID" value="OsLima_05g0000600.03"/>
    <property type="gene ID" value="OsLima_05g0000600"/>
</dbReference>
<dbReference type="EnsemblPlants" id="OsLiXu_05g0000580.01">
    <property type="protein sequence ID" value="OsLiXu_05g0000580.01"/>
    <property type="gene ID" value="OsLiXu_05g0000580"/>
</dbReference>
<dbReference type="EnsemblPlants" id="OsLiXu_05g0000580.02">
    <property type="protein sequence ID" value="OsLiXu_05g0000580.02"/>
    <property type="gene ID" value="OsLiXu_05g0000580"/>
</dbReference>
<dbReference type="EnsemblPlants" id="OsMH63_05G000560_01">
    <property type="protein sequence ID" value="OsMH63_05G000560_01"/>
    <property type="gene ID" value="OsMH63_05G000560"/>
</dbReference>
<dbReference type="EnsemblPlants" id="OsMH63_05G000560_02">
    <property type="protein sequence ID" value="OsMH63_05G000560_02"/>
    <property type="gene ID" value="OsMH63_05G000560"/>
</dbReference>
<dbReference type="EnsemblPlants" id="OsPr106_05g0000560.01">
    <property type="protein sequence ID" value="OsPr106_05g0000560.01"/>
    <property type="gene ID" value="OsPr106_05g0000560"/>
</dbReference>
<dbReference type="EnsemblPlants" id="OsPr106_05g0000560.02">
    <property type="protein sequence ID" value="OsPr106_05g0000560.02"/>
    <property type="gene ID" value="OsPr106_05g0000560"/>
</dbReference>
<dbReference type="EnsemblPlants" id="OsZS97_05G000540_01">
    <property type="protein sequence ID" value="OsZS97_05G000540_01"/>
    <property type="gene ID" value="OsZS97_05G000540"/>
</dbReference>
<dbReference type="EnsemblPlants" id="OsZS97_05G000540_02">
    <property type="protein sequence ID" value="OsZS97_05G000540_02"/>
    <property type="gene ID" value="OsZS97_05G000540"/>
</dbReference>
<dbReference type="EnsemblPlants" id="OsZS97_05G000540_03">
    <property type="protein sequence ID" value="OsZS97_05G000540_03"/>
    <property type="gene ID" value="OsZS97_05G000540"/>
</dbReference>
<dbReference type="EnsemblPlants" id="OsZS97_05G000540_04">
    <property type="protein sequence ID" value="OsZS97_05G000540_04"/>
    <property type="gene ID" value="OsZS97_05G000540"/>
</dbReference>
<dbReference type="Gramene" id="BGIOSGA019022-TA">
    <property type="protein sequence ID" value="BGIOSGA019022-PA"/>
    <property type="gene ID" value="BGIOSGA019022"/>
</dbReference>
<dbReference type="Gramene" id="OsGoSa_05g0000560.01">
    <property type="protein sequence ID" value="OsGoSa_05g0000560.01"/>
    <property type="gene ID" value="OsGoSa_05g0000560"/>
</dbReference>
<dbReference type="Gramene" id="OsGoSa_05g0000560.02">
    <property type="protein sequence ID" value="OsGoSa_05g0000560.02"/>
    <property type="gene ID" value="OsGoSa_05g0000560"/>
</dbReference>
<dbReference type="Gramene" id="OsGoSa_05g0000560.03">
    <property type="protein sequence ID" value="OsGoSa_05g0000560.03"/>
    <property type="gene ID" value="OsGoSa_05g0000560"/>
</dbReference>
<dbReference type="Gramene" id="OsIR64_05g0000580.01">
    <property type="protein sequence ID" value="OsIR64_05g0000580.01"/>
    <property type="gene ID" value="OsIR64_05g0000580"/>
</dbReference>
<dbReference type="Gramene" id="OsIR64_05g0000580.02">
    <property type="protein sequence ID" value="OsIR64_05g0000580.02"/>
    <property type="gene ID" value="OsIR64_05g0000580"/>
</dbReference>
<dbReference type="Gramene" id="OsKYG_05g0000540.01">
    <property type="protein sequence ID" value="OsKYG_05g0000540.01"/>
    <property type="gene ID" value="OsKYG_05g0000540"/>
</dbReference>
<dbReference type="Gramene" id="OsKYG_05g0000540.02">
    <property type="protein sequence ID" value="OsKYG_05g0000540.02"/>
    <property type="gene ID" value="OsKYG_05g0000540"/>
</dbReference>
<dbReference type="Gramene" id="OsKYG_05g0000540.03">
    <property type="protein sequence ID" value="OsKYG_05g0000540.03"/>
    <property type="gene ID" value="OsKYG_05g0000540"/>
</dbReference>
<dbReference type="Gramene" id="OsLaMu_05g0000590.01">
    <property type="protein sequence ID" value="OsLaMu_05g0000590.01"/>
    <property type="gene ID" value="OsLaMu_05g0000590"/>
</dbReference>
<dbReference type="Gramene" id="OsLaMu_05g0000590.02">
    <property type="protein sequence ID" value="OsLaMu_05g0000590.02"/>
    <property type="gene ID" value="OsLaMu_05g0000590"/>
</dbReference>
<dbReference type="Gramene" id="OsLima_05g0000600.01">
    <property type="protein sequence ID" value="OsLima_05g0000600.01"/>
    <property type="gene ID" value="OsLima_05g0000600"/>
</dbReference>
<dbReference type="Gramene" id="OsLima_05g0000600.02">
    <property type="protein sequence ID" value="OsLima_05g0000600.02"/>
    <property type="gene ID" value="OsLima_05g0000600"/>
</dbReference>
<dbReference type="Gramene" id="OsLima_05g0000600.03">
    <property type="protein sequence ID" value="OsLima_05g0000600.03"/>
    <property type="gene ID" value="OsLima_05g0000600"/>
</dbReference>
<dbReference type="Gramene" id="OsLiXu_05g0000580.01">
    <property type="protein sequence ID" value="OsLiXu_05g0000580.01"/>
    <property type="gene ID" value="OsLiXu_05g0000580"/>
</dbReference>
<dbReference type="Gramene" id="OsLiXu_05g0000580.02">
    <property type="protein sequence ID" value="OsLiXu_05g0000580.02"/>
    <property type="gene ID" value="OsLiXu_05g0000580"/>
</dbReference>
<dbReference type="Gramene" id="OsMH63_05G000560_01">
    <property type="protein sequence ID" value="OsMH63_05G000560_01"/>
    <property type="gene ID" value="OsMH63_05G000560"/>
</dbReference>
<dbReference type="Gramene" id="OsMH63_05G000560_02">
    <property type="protein sequence ID" value="OsMH63_05G000560_02"/>
    <property type="gene ID" value="OsMH63_05G000560"/>
</dbReference>
<dbReference type="Gramene" id="OsPr106_05g0000560.01">
    <property type="protein sequence ID" value="OsPr106_05g0000560.01"/>
    <property type="gene ID" value="OsPr106_05g0000560"/>
</dbReference>
<dbReference type="Gramene" id="OsPr106_05g0000560.02">
    <property type="protein sequence ID" value="OsPr106_05g0000560.02"/>
    <property type="gene ID" value="OsPr106_05g0000560"/>
</dbReference>
<dbReference type="Gramene" id="OsZS97_05G000540_01">
    <property type="protein sequence ID" value="OsZS97_05G000540_01"/>
    <property type="gene ID" value="OsZS97_05G000540"/>
</dbReference>
<dbReference type="Gramene" id="OsZS97_05G000540_02">
    <property type="protein sequence ID" value="OsZS97_05G000540_02"/>
    <property type="gene ID" value="OsZS97_05G000540"/>
</dbReference>
<dbReference type="Gramene" id="OsZS97_05G000540_03">
    <property type="protein sequence ID" value="OsZS97_05G000540_03"/>
    <property type="gene ID" value="OsZS97_05G000540"/>
</dbReference>
<dbReference type="Gramene" id="OsZS97_05G000540_04">
    <property type="protein sequence ID" value="OsZS97_05G000540_04"/>
    <property type="gene ID" value="OsZS97_05G000540"/>
</dbReference>
<dbReference type="HOGENOM" id="CLU_112964_3_1_1"/>
<dbReference type="OMA" id="QYYELYR"/>
<dbReference type="OrthoDB" id="586585at2759"/>
<dbReference type="Proteomes" id="UP000007015">
    <property type="component" value="Chromosome 5"/>
</dbReference>
<dbReference type="ExpressionAtlas" id="A2XZI2">
    <property type="expression patterns" value="differential"/>
</dbReference>
<dbReference type="GO" id="GO:0005672">
    <property type="term" value="C:transcription factor TFIIA complex"/>
    <property type="evidence" value="ECO:0007669"/>
    <property type="project" value="InterPro"/>
</dbReference>
<dbReference type="GO" id="GO:0003743">
    <property type="term" value="F:translation initiation factor activity"/>
    <property type="evidence" value="ECO:0007669"/>
    <property type="project" value="UniProtKB-KW"/>
</dbReference>
<dbReference type="GO" id="GO:0006952">
    <property type="term" value="P:defense response"/>
    <property type="evidence" value="ECO:0007669"/>
    <property type="project" value="UniProtKB-KW"/>
</dbReference>
<dbReference type="GO" id="GO:0006367">
    <property type="term" value="P:transcription initiation at RNA polymerase II promoter"/>
    <property type="evidence" value="ECO:0007669"/>
    <property type="project" value="InterPro"/>
</dbReference>
<dbReference type="CDD" id="cd10014">
    <property type="entry name" value="TFIIA_gamma_C"/>
    <property type="match status" value="1"/>
</dbReference>
<dbReference type="CDD" id="cd10145">
    <property type="entry name" value="TFIIA_gamma_N"/>
    <property type="match status" value="1"/>
</dbReference>
<dbReference type="FunFam" id="1.10.287.190:FF:000001">
    <property type="entry name" value="Transcription initiation factor IIA subunit 2"/>
    <property type="match status" value="1"/>
</dbReference>
<dbReference type="FunFam" id="2.30.18.10:FF:000001">
    <property type="entry name" value="Transcription initiation factor IIA subunit 2"/>
    <property type="match status" value="1"/>
</dbReference>
<dbReference type="Gene3D" id="2.30.18.10">
    <property type="entry name" value="Transcription factor IIA (TFIIA), beta-barrel domain"/>
    <property type="match status" value="1"/>
</dbReference>
<dbReference type="Gene3D" id="1.10.287.190">
    <property type="entry name" value="Transcription factor IIA gamma subunit, alpha-helical domain"/>
    <property type="match status" value="1"/>
</dbReference>
<dbReference type="InterPro" id="IPR009083">
    <property type="entry name" value="TFIIA_a-hlx"/>
</dbReference>
<dbReference type="InterPro" id="IPR009088">
    <property type="entry name" value="TFIIA_b-brl"/>
</dbReference>
<dbReference type="InterPro" id="IPR003194">
    <property type="entry name" value="TFIIA_gsu"/>
</dbReference>
<dbReference type="InterPro" id="IPR015871">
    <property type="entry name" value="TFIIA_gsu_C"/>
</dbReference>
<dbReference type="InterPro" id="IPR015872">
    <property type="entry name" value="TFIIA_gsu_N"/>
</dbReference>
<dbReference type="PANTHER" id="PTHR10966">
    <property type="entry name" value="TRANSCRIPTION INITIATION FACTOR IIA SUBUNIT 2"/>
    <property type="match status" value="1"/>
</dbReference>
<dbReference type="Pfam" id="PF02751">
    <property type="entry name" value="TFIIA_gamma_C"/>
    <property type="match status" value="1"/>
</dbReference>
<dbReference type="Pfam" id="PF02268">
    <property type="entry name" value="TFIIA_gamma_N"/>
    <property type="match status" value="1"/>
</dbReference>
<dbReference type="PIRSF" id="PIRSF009415">
    <property type="entry name" value="Hum_TFIIA_gamma"/>
    <property type="match status" value="1"/>
</dbReference>
<dbReference type="SUPFAM" id="SSF47396">
    <property type="entry name" value="Transcription factor IIA (TFIIA), alpha-helical domain"/>
    <property type="match status" value="1"/>
</dbReference>
<dbReference type="SUPFAM" id="SSF50784">
    <property type="entry name" value="Transcription factor IIA (TFIIA), beta-barrel domain"/>
    <property type="match status" value="1"/>
</dbReference>
<gene>
    <name type="primary">TFIIAy</name>
    <name type="synonym">XA5</name>
    <name type="ORF">OsI_017475</name>
</gene>
<organism>
    <name type="scientific">Oryza sativa subsp. indica</name>
    <name type="common">Rice</name>
    <dbReference type="NCBI Taxonomy" id="39946"/>
    <lineage>
        <taxon>Eukaryota</taxon>
        <taxon>Viridiplantae</taxon>
        <taxon>Streptophyta</taxon>
        <taxon>Embryophyta</taxon>
        <taxon>Tracheophyta</taxon>
        <taxon>Spermatophyta</taxon>
        <taxon>Magnoliopsida</taxon>
        <taxon>Liliopsida</taxon>
        <taxon>Poales</taxon>
        <taxon>Poaceae</taxon>
        <taxon>BOP clade</taxon>
        <taxon>Oryzoideae</taxon>
        <taxon>Oryzeae</taxon>
        <taxon>Oryzinae</taxon>
        <taxon>Oryza</taxon>
        <taxon>Oryza sativa</taxon>
    </lineage>
</organism>
<name>T2AG_ORYSI</name>
<comment type="function">
    <text evidence="1 2">TFIIA is a component of the transcription machinery of RNA polymerase II and plays an important role in transcriptional activation. TFIIA in a complex with TBP mediates transcriptional activity (By similarity). Protein involved in the resistance to X.oryzae.</text>
</comment>
<comment type="subunit">
    <text evidence="1">TFIIA is a heterodimer of the large unprocessed subunit 1 and a small subunit gamma. It was originally believed to be a heterotrimer of an alpha, a beta and a gamma subunit (By similarity).</text>
</comment>
<comment type="subcellular location">
    <subcellularLocation>
        <location evidence="1">Nucleus</location>
    </subcellularLocation>
</comment>
<comment type="miscellaneous">
    <text>The displayed sequence corresponds to the form of the protein present in strains susceptible to X.oryzae. Substitution of Val-39 to Glu-39 in cultivar indica IRBB5 confers resistance to X.oryzae.</text>
</comment>
<comment type="similarity">
    <text evidence="3">Belongs to the TFIIA subunit 2 family.</text>
</comment>
<proteinExistence type="inferred from homology"/>
<feature type="chain" id="PRO_0000303665" description="Transcription initiation factor IIA subunit 2">
    <location>
        <begin position="1"/>
        <end position="106"/>
    </location>
</feature>
<feature type="sequence variant" description="In strain: cv. IRBB5; confers resistance to X.oryzae." evidence="2">
    <original>V</original>
    <variation>E</variation>
    <location>
        <position position="39"/>
    </location>
</feature>
<reference key="1">
    <citation type="journal article" date="2003" name="Theor. Appl. Genet.">
        <title>High resolution genetic mapping and candidate gene identification at the xa5 locus for bacterial blight resistance in rice (Oryza sativa L.).</title>
        <authorList>
            <person name="Blair M.W."/>
            <person name="Garris A.J."/>
            <person name="Iyer A.S."/>
            <person name="Chapman B."/>
            <person name="Kresovich S."/>
            <person name="McCouch S.R."/>
        </authorList>
    </citation>
    <scope>NUCLEOTIDE SEQUENCE [GENOMIC DNA]</scope>
    <source>
        <strain>cv. IR24</strain>
    </source>
</reference>
<reference key="2">
    <citation type="journal article" date="2004" name="Mol. Plant Microbe Interact.">
        <title>The rice bacterial blight resistance gene xa5 encodes a novel form of disease resistance.</title>
        <authorList>
            <person name="Iyer A.S."/>
            <person name="McCouch S.R."/>
        </authorList>
    </citation>
    <scope>NUCLEOTIDE SEQUENCE [MRNA]</scope>
    <scope>FUNCTION</scope>
    <scope>VARIANT GLU-39</scope>
    <source>
        <strain>cv. Aus-Boro</strain>
        <strain>cv. IRBB5</strain>
    </source>
</reference>
<reference key="3">
    <citation type="journal article" date="2005" name="PLoS Biol.">
        <title>The genomes of Oryza sativa: a history of duplications.</title>
        <authorList>
            <person name="Yu J."/>
            <person name="Wang J."/>
            <person name="Lin W."/>
            <person name="Li S."/>
            <person name="Li H."/>
            <person name="Zhou J."/>
            <person name="Ni P."/>
            <person name="Dong W."/>
            <person name="Hu S."/>
            <person name="Zeng C."/>
            <person name="Zhang J."/>
            <person name="Zhang Y."/>
            <person name="Li R."/>
            <person name="Xu Z."/>
            <person name="Li S."/>
            <person name="Li X."/>
            <person name="Zheng H."/>
            <person name="Cong L."/>
            <person name="Lin L."/>
            <person name="Yin J."/>
            <person name="Geng J."/>
            <person name="Li G."/>
            <person name="Shi J."/>
            <person name="Liu J."/>
            <person name="Lv H."/>
            <person name="Li J."/>
            <person name="Wang J."/>
            <person name="Deng Y."/>
            <person name="Ran L."/>
            <person name="Shi X."/>
            <person name="Wang X."/>
            <person name="Wu Q."/>
            <person name="Li C."/>
            <person name="Ren X."/>
            <person name="Wang J."/>
            <person name="Wang X."/>
            <person name="Li D."/>
            <person name="Liu D."/>
            <person name="Zhang X."/>
            <person name="Ji Z."/>
            <person name="Zhao W."/>
            <person name="Sun Y."/>
            <person name="Zhang Z."/>
            <person name="Bao J."/>
            <person name="Han Y."/>
            <person name="Dong L."/>
            <person name="Ji J."/>
            <person name="Chen P."/>
            <person name="Wu S."/>
            <person name="Liu J."/>
            <person name="Xiao Y."/>
            <person name="Bu D."/>
            <person name="Tan J."/>
            <person name="Yang L."/>
            <person name="Ye C."/>
            <person name="Zhang J."/>
            <person name="Xu J."/>
            <person name="Zhou Y."/>
            <person name="Yu Y."/>
            <person name="Zhang B."/>
            <person name="Zhuang S."/>
            <person name="Wei H."/>
            <person name="Liu B."/>
            <person name="Lei M."/>
            <person name="Yu H."/>
            <person name="Li Y."/>
            <person name="Xu H."/>
            <person name="Wei S."/>
            <person name="He X."/>
            <person name="Fang L."/>
            <person name="Zhang Z."/>
            <person name="Zhang Y."/>
            <person name="Huang X."/>
            <person name="Su Z."/>
            <person name="Tong W."/>
            <person name="Li J."/>
            <person name="Tong Z."/>
            <person name="Li S."/>
            <person name="Ye J."/>
            <person name="Wang L."/>
            <person name="Fang L."/>
            <person name="Lei T."/>
            <person name="Chen C.-S."/>
            <person name="Chen H.-C."/>
            <person name="Xu Z."/>
            <person name="Li H."/>
            <person name="Huang H."/>
            <person name="Zhang F."/>
            <person name="Xu H."/>
            <person name="Li N."/>
            <person name="Zhao C."/>
            <person name="Li S."/>
            <person name="Dong L."/>
            <person name="Huang Y."/>
            <person name="Li L."/>
            <person name="Xi Y."/>
            <person name="Qi Q."/>
            <person name="Li W."/>
            <person name="Zhang B."/>
            <person name="Hu W."/>
            <person name="Zhang Y."/>
            <person name="Tian X."/>
            <person name="Jiao Y."/>
            <person name="Liang X."/>
            <person name="Jin J."/>
            <person name="Gao L."/>
            <person name="Zheng W."/>
            <person name="Hao B."/>
            <person name="Liu S.-M."/>
            <person name="Wang W."/>
            <person name="Yuan L."/>
            <person name="Cao M."/>
            <person name="McDermott J."/>
            <person name="Samudrala R."/>
            <person name="Wang J."/>
            <person name="Wong G.K.-S."/>
            <person name="Yang H."/>
        </authorList>
    </citation>
    <scope>NUCLEOTIDE SEQUENCE [LARGE SCALE GENOMIC DNA]</scope>
    <source>
        <strain>cv. 93-11</strain>
    </source>
</reference>
<protein>
    <recommendedName>
        <fullName>Transcription initiation factor IIA subunit 2</fullName>
    </recommendedName>
    <alternativeName>
        <fullName>General transcription factor IIA subunit 2</fullName>
    </alternativeName>
    <alternativeName>
        <fullName>Transcription initiation factor IIA gamma chain</fullName>
        <shortName>TFIIA-gamma</shortName>
    </alternativeName>
</protein>
<accession>A2XZI2</accession>
<accession>Q5SDB6</accession>
<accession>Q65X27</accession>
<accession>Q7FPX2</accession>
<accession>Q94HL5</accession>